<sequence>MRAALLTLAFTALAAAADDATTTVGFFGGGEWENSNDDDSLPLIPSYTSIGASVVDVNAVETVLAISCLEGAATESCSINDPWTMTQGISSFSWYAEYTAFDWNPPVTATLDYNCAYENYTLSATCTYSMSYSGSSDGAETSTSFSTETSWDSVATYAALEVTGGLDKFNQPEATETPEGGAGFAGPIQAMVTAAPVLAAGLLASHASGAWRKGKILLIKPFKGILPRLARLEASVKSPNPYRNEPLTPNLDIRAPSSGQCNASLYTRHHPGCFDDDIDSLGQVVLSSQVLGVFFNRLCRVEFVCPDAQFACRECQPVFVDIHCNDVPSTKLPCCRGRKQTNRPCPKNKHILAWLELCKAEAMHRDSKGLKDNAFVKPYVVGELVAEVPRQAEKGRQRAMDNIARSRNCGKGHVRT</sequence>
<comment type="function">
    <text evidence="4 5 7">Part of the gene cluster that mediates the biosynthesis of notoamide, a fungal indole alkaloid that belongs to a family of natural products containing a characteristic bicyclo[2.2.2]diazaoctane core (PubMed:23213353). The first step of notoamide biosynthesis involves coupling of L-proline and L-tryptophan by the bimodular NRPS notE', to produce cyclo-L-tryptophan-L-proline called brevianamide F (Probable). The reverse prenyltransferase notF' then acts as a deoxybrevianamide E synthase and converts brevianamide F to deoxybrevianamide E via reverse prenylation at C-2 of the indole ring leading to the bicyclo[2.2.2]diazaoctane core (Probable) (PubMed:22660767). Deoxybrevianamide E is further hydroxylated at C-6 of the indole ring, likely catalyzed by the cytochrome P450 monooxygenase notG', to yield 6-hydroxy-deoxybrevianamide E (Probable). 6-hydroxy-deoxybrevianamide E is a specific substrate of the prenyltransferase notC' for normal prenylation at C-7 to produce 6-hydroxy-7-prenyl-deoxybrevianamide, also called notoamide S (Probable). As the proposed pivotal branching point in notoamide biosynthesis, notoamide S can be diverted to notoamide E through an oxidative pyran ring closure putatively catalyzed by either notH' cytochrome P450 monooxygenase or the notD' FAD-linked oxidoreductase (Probable). This step would be followed by an indole 2,3-epoxidation-initiated pinacol-like rearrangement catalyzed by the notB' FAD-dependent monooxygenase leading to the formation of notoamide C and notoamide D (Probable). On the other hand notoamide S is converted to notoamide T by notH' (or notD'), a bifunctional oxidase that also functions as the intramolecular Diels-Alderase responsible for generation of (-)-notoamide T (Probable). To generate antipodal (+)-notoaminide T, notH (or notD) in Aspergillus strain MF297-2 is expected to catalyze a Diels-Alder reaction leading to the opposite stereochemistry (Probable). The remaining oxidoreductase notD' (or notH') likely catalyzes the oxidative pyran ring formation to yield (-)-stephacidin A (Probable). The FAD-dependent monooxygenase notI' is highly similar to notB' and is predicted to catalyze a similar conversion from (-)-stephacidin A to (+)-notoamide B via the 2,3-epoxidation of (-)-stephacidin A followed by a pinacol-type rearrangement (Probable). Finally, it remains unclear which enzyme could be responsible for the final hydroxylation steps leading to notoamide A and sclerotiamide (Probable). The function of notN' in the notoamide biosynthesis has not been determined yet (Probable).</text>
</comment>
<comment type="biotechnology">
    <text evidence="3">Notoamides have been shown to exhibit antitumoral activities (PubMed:17304611). Notoamides A-C show moderate cytotoxicity against HeLa and L1210 cells with IC(50) values in the range of 22-52 mg/ml, but the IC(50) value of notoamide D is greater than 100 mg/ml (PubMed:17304611). Moreover, notoamide C induces G2/M-cell cycle arrest at a concentration of 6.3 mg/ml (PubMed:17304611).</text>
</comment>
<gene>
    <name evidence="6" type="primary">notN'</name>
</gene>
<keyword id="KW-0325">Glycoprotein</keyword>
<keyword id="KW-0732">Signal</keyword>
<protein>
    <recommendedName>
        <fullName evidence="6">Notoamide biosynthesis cluster protein N'</fullName>
    </recommendedName>
</protein>
<name>NOTN_ASPVE</name>
<dbReference type="EMBL" id="JQ708194">
    <property type="protein sequence ID" value="AGC83585.1"/>
    <property type="molecule type" value="Genomic_DNA"/>
</dbReference>
<dbReference type="GlyCosmos" id="L7WR53">
    <property type="glycosylation" value="2 sites, No reported glycans"/>
</dbReference>
<dbReference type="VEuPathDB" id="FungiDB:ASPVEDRAFT_178400"/>
<feature type="signal peptide" evidence="1">
    <location>
        <begin position="1"/>
        <end position="16"/>
    </location>
</feature>
<feature type="chain" id="PRO_5003985463" description="Notoamide biosynthesis cluster protein N'" evidence="1">
    <location>
        <begin position="17"/>
        <end position="416"/>
    </location>
</feature>
<feature type="glycosylation site" description="N-linked (GlcNAc...) asparagine" evidence="2">
    <location>
        <position position="119"/>
    </location>
</feature>
<feature type="glycosylation site" description="N-linked (GlcNAc...) asparagine" evidence="2">
    <location>
        <position position="262"/>
    </location>
</feature>
<accession>L7WR53</accession>
<evidence type="ECO:0000255" key="1"/>
<evidence type="ECO:0000255" key="2">
    <source>
        <dbReference type="PROSITE-ProRule" id="PRU00498"/>
    </source>
</evidence>
<evidence type="ECO:0000269" key="3">
    <source>
    </source>
</evidence>
<evidence type="ECO:0000269" key="4">
    <source>
    </source>
</evidence>
<evidence type="ECO:0000269" key="5">
    <source>
    </source>
</evidence>
<evidence type="ECO:0000303" key="6">
    <source>
    </source>
</evidence>
<evidence type="ECO:0000305" key="7">
    <source>
    </source>
</evidence>
<reference key="1">
    <citation type="journal article" date="2012" name="Med. Chem. Commun.">
        <title>Comparative analysis of the biosynthetic systems for fungal bicyclo[2.2.2]diazaoctane indole alkaloids: the (+)/(-)-notoamide, paraherquamide and malbrancheamide pathways.</title>
        <authorList>
            <person name="Li S."/>
            <person name="Anand K."/>
            <person name="Tran H."/>
            <person name="Yu F."/>
            <person name="Finefield J.M."/>
            <person name="Sunderhaus J.D."/>
            <person name="McAfoos T.J."/>
            <person name="Tsukamoto S."/>
            <person name="Williams R.M."/>
            <person name="Sherman D.H."/>
        </authorList>
    </citation>
    <scope>NUCLEOTIDE SEQUENCE [GENOMIC DNA]</scope>
    <source>
        <strain>NRRL 35600</strain>
    </source>
</reference>
<reference key="2">
    <citation type="journal article" date="2007" name="Angew. Chem. Int. Ed.">
        <title>Notoamides A-D: prenylated indole alkaloids isolated from a marine-derived fungus, Aspergillus sp.</title>
        <authorList>
            <person name="Kato H."/>
            <person name="Yoshida T."/>
            <person name="Tokue T."/>
            <person name="Nojiri Y."/>
            <person name="Hirota H."/>
            <person name="Ohta T."/>
            <person name="Williams R.M."/>
            <person name="Tsukamoto S."/>
        </authorList>
    </citation>
    <scope>BIOTECHNOLOGY</scope>
</reference>
<reference key="3">
    <citation type="journal article" date="2013" name="Appl. Microbiol. Biotechnol.">
        <title>Identification of a brevianamide F reverse prenyltransferase BrePT from Aspergillus versicolor with a broad substrate specificity towards tryptophan-containing cyclic dipeptides.</title>
        <authorList>
            <person name="Yin S."/>
            <person name="Yu X."/>
            <person name="Wang Q."/>
            <person name="Liu X.Q."/>
            <person name="Li S.M."/>
        </authorList>
    </citation>
    <scope>FUNCTION</scope>
</reference>
<organism>
    <name type="scientific">Aspergillus versicolor</name>
    <dbReference type="NCBI Taxonomy" id="46472"/>
    <lineage>
        <taxon>Eukaryota</taxon>
        <taxon>Fungi</taxon>
        <taxon>Dikarya</taxon>
        <taxon>Ascomycota</taxon>
        <taxon>Pezizomycotina</taxon>
        <taxon>Eurotiomycetes</taxon>
        <taxon>Eurotiomycetidae</taxon>
        <taxon>Eurotiales</taxon>
        <taxon>Aspergillaceae</taxon>
        <taxon>Aspergillus</taxon>
        <taxon>Aspergillus subgen. Nidulantes</taxon>
    </lineage>
</organism>
<proteinExistence type="evidence at protein level"/>